<comment type="function">
    <text evidence="1">Part of the Sec protein translocase complex. Interacts with the SecYEG preprotein conducting channel. SecDF uses the proton motive force (PMF) to complete protein translocation after the ATP-dependent function of SecA.</text>
</comment>
<comment type="subunit">
    <text evidence="1">Forms a complex with SecD. Part of the essential Sec protein translocation apparatus which comprises SecA, SecYEG and auxiliary proteins SecDF-YajC and YidC.</text>
</comment>
<comment type="subcellular location">
    <subcellularLocation>
        <location evidence="1">Cell inner membrane</location>
        <topology evidence="1">Multi-pass membrane protein</topology>
    </subcellularLocation>
</comment>
<comment type="similarity">
    <text evidence="1">Belongs to the SecD/SecF family. SecF subfamily.</text>
</comment>
<feature type="chain" id="PRO_0000316279" description="Protein translocase subunit SecF">
    <location>
        <begin position="1"/>
        <end position="308"/>
    </location>
</feature>
<feature type="transmembrane region" description="Helical" evidence="1">
    <location>
        <begin position="22"/>
        <end position="42"/>
    </location>
</feature>
<feature type="transmembrane region" description="Helical" evidence="1">
    <location>
        <begin position="140"/>
        <end position="160"/>
    </location>
</feature>
<feature type="transmembrane region" description="Helical" evidence="1">
    <location>
        <begin position="164"/>
        <end position="184"/>
    </location>
</feature>
<feature type="transmembrane region" description="Helical" evidence="1">
    <location>
        <begin position="194"/>
        <end position="214"/>
    </location>
</feature>
<feature type="transmembrane region" description="Helical" evidence="1">
    <location>
        <begin position="246"/>
        <end position="266"/>
    </location>
</feature>
<feature type="transmembrane region" description="Helical" evidence="1">
    <location>
        <begin position="272"/>
        <end position="292"/>
    </location>
</feature>
<protein>
    <recommendedName>
        <fullName>Protein translocase subunit SecF</fullName>
    </recommendedName>
</protein>
<name>SECF_RICAH</name>
<organism>
    <name type="scientific">Rickettsia akari (strain Hartford)</name>
    <dbReference type="NCBI Taxonomy" id="293614"/>
    <lineage>
        <taxon>Bacteria</taxon>
        <taxon>Pseudomonadati</taxon>
        <taxon>Pseudomonadota</taxon>
        <taxon>Alphaproteobacteria</taxon>
        <taxon>Rickettsiales</taxon>
        <taxon>Rickettsiaceae</taxon>
        <taxon>Rickettsieae</taxon>
        <taxon>Rickettsia</taxon>
        <taxon>spotted fever group</taxon>
    </lineage>
</organism>
<sequence>MQIYPLRLLPNKIDFDFMNFKAVSYSFSIILSLISFIWIGIYKFNFGIDFAGGIVIEVRLDQAPDLPKMRGVLGELGIGEVVLQNFGSERDLSIRFGISSEENLMKNIELIKASLQSSFPYKFEYRKVDFVGPQVGRQLIEAGAMAMLSSFLAIMVYIWVRFEWYFGLGILIALVHDVILALGFMSITKLDFNLSTIAAVLTIIGYSVNDSVVIYDRIRENLRKYHKKNITEIINLSINETLSRTILTVITTLLANLALMLFGGEAIRSFSVLVFFGIIAGTYSSIFISAPILTMFANRKFNNKVIER</sequence>
<accession>A8GM76</accession>
<dbReference type="EMBL" id="CP000847">
    <property type="protein sequence ID" value="ABV74501.1"/>
    <property type="molecule type" value="Genomic_DNA"/>
</dbReference>
<dbReference type="RefSeq" id="WP_012013371.1">
    <property type="nucleotide sequence ID" value="NC_009881.1"/>
</dbReference>
<dbReference type="SMR" id="A8GM76"/>
<dbReference type="STRING" id="293614.A1C_00855"/>
<dbReference type="KEGG" id="rak:A1C_00855"/>
<dbReference type="eggNOG" id="COG0341">
    <property type="taxonomic scope" value="Bacteria"/>
</dbReference>
<dbReference type="HOGENOM" id="CLU_050012_1_1_5"/>
<dbReference type="Proteomes" id="UP000006830">
    <property type="component" value="Chromosome"/>
</dbReference>
<dbReference type="GO" id="GO:0005886">
    <property type="term" value="C:plasma membrane"/>
    <property type="evidence" value="ECO:0007669"/>
    <property type="project" value="UniProtKB-SubCell"/>
</dbReference>
<dbReference type="GO" id="GO:0015450">
    <property type="term" value="F:protein-transporting ATPase activity"/>
    <property type="evidence" value="ECO:0007669"/>
    <property type="project" value="InterPro"/>
</dbReference>
<dbReference type="GO" id="GO:0065002">
    <property type="term" value="P:intracellular protein transmembrane transport"/>
    <property type="evidence" value="ECO:0007669"/>
    <property type="project" value="UniProtKB-UniRule"/>
</dbReference>
<dbReference type="GO" id="GO:0006605">
    <property type="term" value="P:protein targeting"/>
    <property type="evidence" value="ECO:0007669"/>
    <property type="project" value="UniProtKB-UniRule"/>
</dbReference>
<dbReference type="GO" id="GO:0043952">
    <property type="term" value="P:protein transport by the Sec complex"/>
    <property type="evidence" value="ECO:0007669"/>
    <property type="project" value="UniProtKB-UniRule"/>
</dbReference>
<dbReference type="FunFam" id="1.20.1640.10:FF:000024">
    <property type="entry name" value="Multifunctional fusion protein"/>
    <property type="match status" value="1"/>
</dbReference>
<dbReference type="Gene3D" id="1.20.1640.10">
    <property type="entry name" value="Multidrug efflux transporter AcrB transmembrane domain"/>
    <property type="match status" value="1"/>
</dbReference>
<dbReference type="HAMAP" id="MF_01464_B">
    <property type="entry name" value="SecF_B"/>
    <property type="match status" value="1"/>
</dbReference>
<dbReference type="InterPro" id="IPR022813">
    <property type="entry name" value="SecD/SecF_arch_bac"/>
</dbReference>
<dbReference type="InterPro" id="IPR022645">
    <property type="entry name" value="SecD/SecF_bac"/>
</dbReference>
<dbReference type="InterPro" id="IPR022646">
    <property type="entry name" value="SecD/SecF_CS"/>
</dbReference>
<dbReference type="InterPro" id="IPR048634">
    <property type="entry name" value="SecD_SecF_C"/>
</dbReference>
<dbReference type="InterPro" id="IPR055344">
    <property type="entry name" value="SecD_SecF_C_bact"/>
</dbReference>
<dbReference type="InterPro" id="IPR005665">
    <property type="entry name" value="SecF_bac"/>
</dbReference>
<dbReference type="InterPro" id="IPR000731">
    <property type="entry name" value="SSD"/>
</dbReference>
<dbReference type="NCBIfam" id="TIGR00916">
    <property type="entry name" value="2A0604s01"/>
    <property type="match status" value="1"/>
</dbReference>
<dbReference type="NCBIfam" id="TIGR00966">
    <property type="entry name" value="transloc_SecF"/>
    <property type="match status" value="1"/>
</dbReference>
<dbReference type="PANTHER" id="PTHR30081:SF8">
    <property type="entry name" value="PROTEIN TRANSLOCASE SUBUNIT SECF"/>
    <property type="match status" value="1"/>
</dbReference>
<dbReference type="PANTHER" id="PTHR30081">
    <property type="entry name" value="PROTEIN-EXPORT MEMBRANE PROTEIN SEC"/>
    <property type="match status" value="1"/>
</dbReference>
<dbReference type="Pfam" id="PF07549">
    <property type="entry name" value="Sec_GG"/>
    <property type="match status" value="1"/>
</dbReference>
<dbReference type="Pfam" id="PF02355">
    <property type="entry name" value="SecD_SecF_C"/>
    <property type="match status" value="1"/>
</dbReference>
<dbReference type="PRINTS" id="PR01755">
    <property type="entry name" value="SECFTRNLCASE"/>
</dbReference>
<dbReference type="SUPFAM" id="SSF82866">
    <property type="entry name" value="Multidrug efflux transporter AcrB transmembrane domain"/>
    <property type="match status" value="1"/>
</dbReference>
<dbReference type="PROSITE" id="PS50156">
    <property type="entry name" value="SSD"/>
    <property type="match status" value="1"/>
</dbReference>
<gene>
    <name evidence="1" type="primary">secF</name>
    <name type="ordered locus">A1C_00855</name>
</gene>
<evidence type="ECO:0000255" key="1">
    <source>
        <dbReference type="HAMAP-Rule" id="MF_01464"/>
    </source>
</evidence>
<keyword id="KW-0997">Cell inner membrane</keyword>
<keyword id="KW-1003">Cell membrane</keyword>
<keyword id="KW-0472">Membrane</keyword>
<keyword id="KW-0653">Protein transport</keyword>
<keyword id="KW-0811">Translocation</keyword>
<keyword id="KW-0812">Transmembrane</keyword>
<keyword id="KW-1133">Transmembrane helix</keyword>
<keyword id="KW-0813">Transport</keyword>
<reference key="1">
    <citation type="submission" date="2007-09" db="EMBL/GenBank/DDBJ databases">
        <title>Complete genome sequence of Rickettsia akari.</title>
        <authorList>
            <person name="Madan A."/>
            <person name="Fahey J."/>
            <person name="Helton E."/>
            <person name="Ketteman M."/>
            <person name="Madan A."/>
            <person name="Rodrigues S."/>
            <person name="Sanchez A."/>
            <person name="Whiting M."/>
            <person name="Dasch G."/>
            <person name="Eremeeva M."/>
        </authorList>
    </citation>
    <scope>NUCLEOTIDE SEQUENCE [LARGE SCALE GENOMIC DNA]</scope>
    <source>
        <strain>Hartford</strain>
    </source>
</reference>
<proteinExistence type="inferred from homology"/>